<reference key="1">
    <citation type="journal article" date="2008" name="PLoS ONE">
        <title>Genome sequence of the saprophyte Leptospira biflexa provides insights into the evolution of Leptospira and the pathogenesis of leptospirosis.</title>
        <authorList>
            <person name="Picardeau M."/>
            <person name="Bulach D.M."/>
            <person name="Bouchier C."/>
            <person name="Zuerner R.L."/>
            <person name="Zidane N."/>
            <person name="Wilson P.J."/>
            <person name="Creno S."/>
            <person name="Kuczek E.S."/>
            <person name="Bommezzadri S."/>
            <person name="Davis J.C."/>
            <person name="McGrath A."/>
            <person name="Johnson M.J."/>
            <person name="Boursaux-Eude C."/>
            <person name="Seemann T."/>
            <person name="Rouy Z."/>
            <person name="Coppel R.L."/>
            <person name="Rood J.I."/>
            <person name="Lajus A."/>
            <person name="Davies J.K."/>
            <person name="Medigue C."/>
            <person name="Adler B."/>
        </authorList>
    </citation>
    <scope>NUCLEOTIDE SEQUENCE [LARGE SCALE GENOMIC DNA]</scope>
    <source>
        <strain>Patoc 1 / Ames</strain>
    </source>
</reference>
<feature type="chain" id="PRO_1000121129" description="DNA replication and repair protein RecF">
    <location>
        <begin position="1"/>
        <end position="367"/>
    </location>
</feature>
<feature type="binding site" evidence="1">
    <location>
        <begin position="30"/>
        <end position="37"/>
    </location>
    <ligand>
        <name>ATP</name>
        <dbReference type="ChEBI" id="CHEBI:30616"/>
    </ligand>
</feature>
<dbReference type="EMBL" id="CP000777">
    <property type="protein sequence ID" value="ABZ92553.1"/>
    <property type="molecule type" value="Genomic_DNA"/>
</dbReference>
<dbReference type="RefSeq" id="WP_012387041.1">
    <property type="nucleotide sequence ID" value="NC_010842.1"/>
</dbReference>
<dbReference type="SMR" id="B0S909"/>
<dbReference type="KEGG" id="lbf:LBF_0006"/>
<dbReference type="HOGENOM" id="CLU_040267_0_1_12"/>
<dbReference type="GO" id="GO:0005737">
    <property type="term" value="C:cytoplasm"/>
    <property type="evidence" value="ECO:0007669"/>
    <property type="project" value="UniProtKB-SubCell"/>
</dbReference>
<dbReference type="GO" id="GO:0005524">
    <property type="term" value="F:ATP binding"/>
    <property type="evidence" value="ECO:0007669"/>
    <property type="project" value="UniProtKB-UniRule"/>
</dbReference>
<dbReference type="GO" id="GO:0003697">
    <property type="term" value="F:single-stranded DNA binding"/>
    <property type="evidence" value="ECO:0007669"/>
    <property type="project" value="UniProtKB-UniRule"/>
</dbReference>
<dbReference type="GO" id="GO:0006260">
    <property type="term" value="P:DNA replication"/>
    <property type="evidence" value="ECO:0007669"/>
    <property type="project" value="UniProtKB-UniRule"/>
</dbReference>
<dbReference type="GO" id="GO:0000731">
    <property type="term" value="P:DNA synthesis involved in DNA repair"/>
    <property type="evidence" value="ECO:0007669"/>
    <property type="project" value="TreeGrafter"/>
</dbReference>
<dbReference type="GO" id="GO:0006302">
    <property type="term" value="P:double-strand break repair"/>
    <property type="evidence" value="ECO:0007669"/>
    <property type="project" value="TreeGrafter"/>
</dbReference>
<dbReference type="GO" id="GO:0009432">
    <property type="term" value="P:SOS response"/>
    <property type="evidence" value="ECO:0007669"/>
    <property type="project" value="UniProtKB-UniRule"/>
</dbReference>
<dbReference type="Gene3D" id="3.40.50.300">
    <property type="entry name" value="P-loop containing nucleotide triphosphate hydrolases"/>
    <property type="match status" value="1"/>
</dbReference>
<dbReference type="Gene3D" id="1.20.1050.90">
    <property type="entry name" value="RecF/RecN/SMC, N-terminal domain"/>
    <property type="match status" value="1"/>
</dbReference>
<dbReference type="HAMAP" id="MF_00365">
    <property type="entry name" value="RecF"/>
    <property type="match status" value="1"/>
</dbReference>
<dbReference type="InterPro" id="IPR001238">
    <property type="entry name" value="DNA-binding_RecF"/>
</dbReference>
<dbReference type="InterPro" id="IPR018078">
    <property type="entry name" value="DNA-binding_RecF_CS"/>
</dbReference>
<dbReference type="InterPro" id="IPR027417">
    <property type="entry name" value="P-loop_NTPase"/>
</dbReference>
<dbReference type="InterPro" id="IPR003395">
    <property type="entry name" value="RecF/RecN/SMC_N"/>
</dbReference>
<dbReference type="InterPro" id="IPR042174">
    <property type="entry name" value="RecF_2"/>
</dbReference>
<dbReference type="NCBIfam" id="TIGR00611">
    <property type="entry name" value="recf"/>
    <property type="match status" value="1"/>
</dbReference>
<dbReference type="PANTHER" id="PTHR32182">
    <property type="entry name" value="DNA REPLICATION AND REPAIR PROTEIN RECF"/>
    <property type="match status" value="1"/>
</dbReference>
<dbReference type="PANTHER" id="PTHR32182:SF0">
    <property type="entry name" value="DNA REPLICATION AND REPAIR PROTEIN RECF"/>
    <property type="match status" value="1"/>
</dbReference>
<dbReference type="Pfam" id="PF02463">
    <property type="entry name" value="SMC_N"/>
    <property type="match status" value="1"/>
</dbReference>
<dbReference type="SUPFAM" id="SSF52540">
    <property type="entry name" value="P-loop containing nucleoside triphosphate hydrolases"/>
    <property type="match status" value="1"/>
</dbReference>
<dbReference type="PROSITE" id="PS00618">
    <property type="entry name" value="RECF_2"/>
    <property type="match status" value="1"/>
</dbReference>
<name>RECF_LEPBA</name>
<organism>
    <name type="scientific">Leptospira biflexa serovar Patoc (strain Patoc 1 / Ames)</name>
    <dbReference type="NCBI Taxonomy" id="355278"/>
    <lineage>
        <taxon>Bacteria</taxon>
        <taxon>Pseudomonadati</taxon>
        <taxon>Spirochaetota</taxon>
        <taxon>Spirochaetia</taxon>
        <taxon>Leptospirales</taxon>
        <taxon>Leptospiraceae</taxon>
        <taxon>Leptospira</taxon>
    </lineage>
</organism>
<keyword id="KW-0067">ATP-binding</keyword>
<keyword id="KW-0963">Cytoplasm</keyword>
<keyword id="KW-0227">DNA damage</keyword>
<keyword id="KW-0234">DNA repair</keyword>
<keyword id="KW-0235">DNA replication</keyword>
<keyword id="KW-0238">DNA-binding</keyword>
<keyword id="KW-0547">Nucleotide-binding</keyword>
<keyword id="KW-0742">SOS response</keyword>
<evidence type="ECO:0000255" key="1">
    <source>
        <dbReference type="HAMAP-Rule" id="MF_00365"/>
    </source>
</evidence>
<proteinExistence type="inferred from homology"/>
<accession>B0S909</accession>
<comment type="function">
    <text evidence="1">The RecF protein is involved in DNA metabolism; it is required for DNA replication and normal SOS inducibility. RecF binds preferentially to single-stranded, linear DNA. It also seems to bind ATP.</text>
</comment>
<comment type="subcellular location">
    <subcellularLocation>
        <location evidence="1">Cytoplasm</location>
    </subcellularLocation>
</comment>
<comment type="similarity">
    <text evidence="1">Belongs to the RecF family.</text>
</comment>
<gene>
    <name evidence="1" type="primary">recF</name>
    <name type="ordered locus">LBF_0006</name>
</gene>
<protein>
    <recommendedName>
        <fullName evidence="1">DNA replication and repair protein RecF</fullName>
    </recommendedName>
</protein>
<sequence>MFLKKIYIKNFRNHEETQLTFKSRLVFFIGNNGEGKTNLLESISLLSYLKSFRESDQNQLLRWDTSDTFIRAEFESEGNEYLFEYGIEHSQTKRKKLKVNGEEFKKISDYVGYFRSIVMSPPDILIIEDGNVERRRFLDAFISSTNRYYLKQLIEYERLIKQRNAALKKENASDREIGIWDEPIIEHDSEIREIRTKTIQSLAGYFHQNLLQLSSGKDPYFLTYKPNITSKEEHKQKLIDNLRKDKAIGYTSCGNHRDTLPIGFDDKDLSGFGSQGQKRSAVIALKTACFQMIRDTTGEAPVLLIDDIIRELDVKRREYFVNLISECGQAFFTTTDLEGINEYVGNLTVDKEIYIIDSGKVKVFTEI</sequence>